<evidence type="ECO:0000250" key="1"/>
<evidence type="ECO:0000250" key="2">
    <source>
        <dbReference type="UniProtKB" id="P32485"/>
    </source>
</evidence>
<evidence type="ECO:0000250" key="3">
    <source>
        <dbReference type="UniProtKB" id="Q16539"/>
    </source>
</evidence>
<evidence type="ECO:0000255" key="4">
    <source>
        <dbReference type="PROSITE-ProRule" id="PRU00159"/>
    </source>
</evidence>
<evidence type="ECO:0000255" key="5">
    <source>
        <dbReference type="PROSITE-ProRule" id="PRU10027"/>
    </source>
</evidence>
<evidence type="ECO:0000269" key="6">
    <source>
    </source>
</evidence>
<evidence type="ECO:0000269" key="7">
    <source>
    </source>
</evidence>
<evidence type="ECO:0000305" key="8"/>
<proteinExistence type="evidence at protein level"/>
<comment type="function">
    <text evidence="6 7">Proline-directed serine/threonine-protein kinase involved in a signal transduction pathway that is activated by changes in the osmolarity of the extracellular environment. Controls osmotic regulation of transcription of target genes. Also involved in the response to UV radiation and mediates the sensitivity to fludioxonil, an agricultural fungicide.</text>
</comment>
<comment type="catalytic activity">
    <reaction evidence="2">
        <text>L-seryl-[protein] + ATP = O-phospho-L-seryl-[protein] + ADP + H(+)</text>
        <dbReference type="Rhea" id="RHEA:17989"/>
        <dbReference type="Rhea" id="RHEA-COMP:9863"/>
        <dbReference type="Rhea" id="RHEA-COMP:11604"/>
        <dbReference type="ChEBI" id="CHEBI:15378"/>
        <dbReference type="ChEBI" id="CHEBI:29999"/>
        <dbReference type="ChEBI" id="CHEBI:30616"/>
        <dbReference type="ChEBI" id="CHEBI:83421"/>
        <dbReference type="ChEBI" id="CHEBI:456216"/>
        <dbReference type="EC" id="2.7.11.24"/>
    </reaction>
    <physiologicalReaction direction="left-to-right" evidence="2">
        <dbReference type="Rhea" id="RHEA:17990"/>
    </physiologicalReaction>
</comment>
<comment type="catalytic activity">
    <reaction evidence="2">
        <text>L-threonyl-[protein] + ATP = O-phospho-L-threonyl-[protein] + ADP + H(+)</text>
        <dbReference type="Rhea" id="RHEA:46608"/>
        <dbReference type="Rhea" id="RHEA-COMP:11060"/>
        <dbReference type="Rhea" id="RHEA-COMP:11605"/>
        <dbReference type="ChEBI" id="CHEBI:15378"/>
        <dbReference type="ChEBI" id="CHEBI:30013"/>
        <dbReference type="ChEBI" id="CHEBI:30616"/>
        <dbReference type="ChEBI" id="CHEBI:61977"/>
        <dbReference type="ChEBI" id="CHEBI:456216"/>
        <dbReference type="EC" id="2.7.11.24"/>
    </reaction>
    <physiologicalReaction direction="left-to-right" evidence="2">
        <dbReference type="Rhea" id="RHEA:46609"/>
    </physiologicalReaction>
</comment>
<comment type="cofactor">
    <cofactor evidence="3">
        <name>Mg(2+)</name>
        <dbReference type="ChEBI" id="CHEBI:18420"/>
    </cofactor>
</comment>
<comment type="activity regulation">
    <text evidence="1">Activated by tyrosine and threonine phosphorylation.</text>
</comment>
<comment type="subcellular location">
    <subcellularLocation>
        <location evidence="6">Cytoplasm</location>
    </subcellularLocation>
    <subcellularLocation>
        <location evidence="6">Nucleus</location>
    </subcellularLocation>
    <text>Predominantly cytoplasmic in unstressed cells but rapidly concentrates within the nucleus in response to hyperosmotic conditions and phosphorylation.</text>
</comment>
<comment type="domain">
    <text>The TXY motif contains the threonine and tyrosine residues whose phosphorylation activates the MAP kinases.</text>
</comment>
<comment type="PTM">
    <text evidence="1 6 7">Dually phosphorylated on Thr-171 and Tyr-173, which activates the enzyme (By similarity). Phosphorylated by PBS2 after osmotic stress.</text>
</comment>
<comment type="similarity">
    <text evidence="4">Belongs to the protein kinase superfamily. Ser/Thr protein kinase family. MAP kinase subfamily. HOG1 sub-subfamily.</text>
</comment>
<sequence length="365" mass="41213">MADFVKLSIFGTVFEVTTRYVDLQPVGMGAFGLVCSAKDQLSGTSVAIKKIMKPFSTPVLSKRTYRELKLLKHLRHENIISLSDIFISPLEDIYFVTELLGTDLHRLLTSRPLEKQFIQYFLYQILRGLKYVHSAGVVHRDLKPSNILVNENCDLKICDFGLARIQDPQMTGYVSTRYYRAPEIMLTWQKYDVAVDIWSTGCIFAEMLEGKPLFPGKDHVNQFSIITELLGTPPDDVIQTIASENTLRFVQSLPKREKVPFSTKFPNADPVSLDLLEKMLVFDPRTRISAAEGLAHEYLAPYHDPTDEPVAAEVFDWSFNDADLPVDTWKVMMYSEILDFHNLGDISQNEAEGPVTGEVPAAPAS</sequence>
<reference key="1">
    <citation type="submission" date="2000-03" db="EMBL/GenBank/DDBJ databases">
        <title>Functional characterization of Cryptococcus neoformans mitogen-activated protein kinase homolog HOG1.</title>
        <authorList>
            <person name="Saha S.K."/>
            <person name="Chaturvedi V."/>
        </authorList>
    </citation>
    <scope>NUCLEOTIDE SEQUENCE [MRNA]</scope>
</reference>
<reference key="2">
    <citation type="journal article" date="2005" name="Science">
        <title>The genome of the basidiomycetous yeast and human pathogen Cryptococcus neoformans.</title>
        <authorList>
            <person name="Loftus B.J."/>
            <person name="Fung E."/>
            <person name="Roncaglia P."/>
            <person name="Rowley D."/>
            <person name="Amedeo P."/>
            <person name="Bruno D."/>
            <person name="Vamathevan J."/>
            <person name="Miranda M."/>
            <person name="Anderson I.J."/>
            <person name="Fraser J.A."/>
            <person name="Allen J.E."/>
            <person name="Bosdet I.E."/>
            <person name="Brent M.R."/>
            <person name="Chiu R."/>
            <person name="Doering T.L."/>
            <person name="Donlin M.J."/>
            <person name="D'Souza C.A."/>
            <person name="Fox D.S."/>
            <person name="Grinberg V."/>
            <person name="Fu J."/>
            <person name="Fukushima M."/>
            <person name="Haas B.J."/>
            <person name="Huang J.C."/>
            <person name="Janbon G."/>
            <person name="Jones S.J.M."/>
            <person name="Koo H.L."/>
            <person name="Krzywinski M.I."/>
            <person name="Kwon-Chung K.J."/>
            <person name="Lengeler K.B."/>
            <person name="Maiti R."/>
            <person name="Marra M.A."/>
            <person name="Marra R.E."/>
            <person name="Mathewson C.A."/>
            <person name="Mitchell T.G."/>
            <person name="Pertea M."/>
            <person name="Riggs F.R."/>
            <person name="Salzberg S.L."/>
            <person name="Schein J.E."/>
            <person name="Shvartsbeyn A."/>
            <person name="Shin H."/>
            <person name="Shumway M."/>
            <person name="Specht C.A."/>
            <person name="Suh B.B."/>
            <person name="Tenney A."/>
            <person name="Utterback T.R."/>
            <person name="Wickes B.L."/>
            <person name="Wortman J.R."/>
            <person name="Wye N.H."/>
            <person name="Kronstad J.W."/>
            <person name="Lodge J.K."/>
            <person name="Heitman J."/>
            <person name="Davis R.W."/>
            <person name="Fraser C.M."/>
            <person name="Hyman R.W."/>
        </authorList>
    </citation>
    <scope>NUCLEOTIDE SEQUENCE [LARGE SCALE GENOMIC DNA]</scope>
    <source>
        <strain>JEC21 / ATCC MYA-565</strain>
    </source>
</reference>
<reference key="3">
    <citation type="journal article" date="2005" name="Mol. Biol. Cell">
        <title>Specialization of the HOG pathway and its impact on differentiation and virulence of Cryptococcus neoformans.</title>
        <authorList>
            <person name="Bahn Y.-S."/>
            <person name="Kojima K."/>
            <person name="Cox G.M."/>
            <person name="Heitman J."/>
        </authorList>
    </citation>
    <scope>FUNCTION</scope>
    <scope>PHOSPHORYLATION</scope>
    <scope>SUBCELLULAR LOCATION</scope>
    <source>
        <strain>H99 / ATCC 208821 / CBS 10515 / FGSC 9487</strain>
        <strain>JEC21 / ATCC MYA-565</strain>
    </source>
</reference>
<reference key="4">
    <citation type="journal article" date="2006" name="Microbiology">
        <title>Calcineurin, Mpk1 and Hog1 MAPK pathways independently control fludioxonil antifungal sensitivity in Cryptococcus neoformans.</title>
        <authorList>
            <person name="Kojima K."/>
            <person name="Bahn Y.-S."/>
            <person name="Heitman J."/>
        </authorList>
    </citation>
    <scope>FUNCTION</scope>
    <scope>PHOSPHORYLATION</scope>
    <source>
        <strain>H99 / ATCC 208821 / CBS 10515 / FGSC 9487</strain>
        <strain>JEC21 / ATCC MYA-565</strain>
    </source>
</reference>
<accession>P0CP68</accession>
<accession>Q55WS9</accession>
<accession>Q5KJG8</accession>
<accession>Q8NKG4</accession>
<protein>
    <recommendedName>
        <fullName>Mitogen-activated protein kinase HOG1</fullName>
        <shortName>MAP kinase HOG1</shortName>
        <ecNumber evidence="2">2.7.11.24</ecNumber>
    </recommendedName>
</protein>
<feature type="chain" id="PRO_0000289684" description="Mitogen-activated protein kinase HOG1">
    <location>
        <begin position="1"/>
        <end position="365"/>
    </location>
</feature>
<feature type="domain" description="Protein kinase" evidence="4">
    <location>
        <begin position="20"/>
        <end position="299"/>
    </location>
</feature>
<feature type="short sequence motif" description="TXY">
    <location>
        <begin position="171"/>
        <end position="173"/>
    </location>
</feature>
<feature type="active site" description="Proton acceptor" evidence="4 5">
    <location>
        <position position="141"/>
    </location>
</feature>
<feature type="binding site" evidence="4">
    <location>
        <begin position="26"/>
        <end position="34"/>
    </location>
    <ligand>
        <name>ATP</name>
        <dbReference type="ChEBI" id="CHEBI:30616"/>
    </ligand>
</feature>
<feature type="binding site" evidence="4">
    <location>
        <position position="49"/>
    </location>
    <ligand>
        <name>ATP</name>
        <dbReference type="ChEBI" id="CHEBI:30616"/>
    </ligand>
</feature>
<feature type="modified residue" description="Phosphothreonine" evidence="1">
    <location>
        <position position="171"/>
    </location>
</feature>
<feature type="modified residue" description="Phosphotyrosine" evidence="1">
    <location>
        <position position="173"/>
    </location>
</feature>
<feature type="sequence conflict" description="In Ref. 1; AAM26267." evidence="8" ref="1">
    <original>V</original>
    <variation>G</variation>
    <location>
        <position position="195"/>
    </location>
</feature>
<feature type="sequence conflict" description="In Ref. 1; AAM26267." evidence="8" ref="1">
    <original>L</original>
    <variation>I</variation>
    <location>
        <position position="247"/>
    </location>
</feature>
<organism>
    <name type="scientific">Cryptococcus neoformans var. neoformans serotype D (strain JEC21 / ATCC MYA-565)</name>
    <name type="common">Filobasidiella neoformans</name>
    <dbReference type="NCBI Taxonomy" id="214684"/>
    <lineage>
        <taxon>Eukaryota</taxon>
        <taxon>Fungi</taxon>
        <taxon>Dikarya</taxon>
        <taxon>Basidiomycota</taxon>
        <taxon>Agaricomycotina</taxon>
        <taxon>Tremellomycetes</taxon>
        <taxon>Tremellales</taxon>
        <taxon>Cryptococcaceae</taxon>
        <taxon>Cryptococcus</taxon>
        <taxon>Cryptococcus neoformans species complex</taxon>
    </lineage>
</organism>
<gene>
    <name type="primary">HOG1</name>
    <name type="ordered locus">CNC06590</name>
</gene>
<keyword id="KW-0010">Activator</keyword>
<keyword id="KW-0067">ATP-binding</keyword>
<keyword id="KW-0963">Cytoplasm</keyword>
<keyword id="KW-0418">Kinase</keyword>
<keyword id="KW-0547">Nucleotide-binding</keyword>
<keyword id="KW-0539">Nucleus</keyword>
<keyword id="KW-0597">Phosphoprotein</keyword>
<keyword id="KW-1185">Reference proteome</keyword>
<keyword id="KW-0723">Serine/threonine-protein kinase</keyword>
<keyword id="KW-0804">Transcription</keyword>
<keyword id="KW-0805">Transcription regulation</keyword>
<keyword id="KW-0808">Transferase</keyword>
<dbReference type="EC" id="2.7.11.24" evidence="2"/>
<dbReference type="EMBL" id="AF243531">
    <property type="protein sequence ID" value="AAM26267.1"/>
    <property type="molecule type" value="mRNA"/>
</dbReference>
<dbReference type="EMBL" id="AE017343">
    <property type="protein sequence ID" value="AAW42642.1"/>
    <property type="molecule type" value="Genomic_DNA"/>
</dbReference>
<dbReference type="RefSeq" id="XP_569949.1">
    <property type="nucleotide sequence ID" value="XM_569949.1"/>
</dbReference>
<dbReference type="SMR" id="P0CP68"/>
<dbReference type="FunCoup" id="P0CP68">
    <property type="interactions" value="425"/>
</dbReference>
<dbReference type="STRING" id="214684.P0CP68"/>
<dbReference type="PaxDb" id="214684-P0CP68"/>
<dbReference type="EnsemblFungi" id="AAW42642">
    <property type="protein sequence ID" value="AAW42642"/>
    <property type="gene ID" value="CNC06590"/>
</dbReference>
<dbReference type="GeneID" id="3256363"/>
<dbReference type="KEGG" id="cne:CNC06590"/>
<dbReference type="VEuPathDB" id="FungiDB:CNC06590"/>
<dbReference type="eggNOG" id="KOG0660">
    <property type="taxonomic scope" value="Eukaryota"/>
</dbReference>
<dbReference type="HOGENOM" id="CLU_000288_181_1_1"/>
<dbReference type="InParanoid" id="P0CP68"/>
<dbReference type="OMA" id="NRYTDLN"/>
<dbReference type="OrthoDB" id="192887at2759"/>
<dbReference type="Proteomes" id="UP000002149">
    <property type="component" value="Chromosome 3"/>
</dbReference>
<dbReference type="GO" id="GO:0005737">
    <property type="term" value="C:cytoplasm"/>
    <property type="evidence" value="ECO:0000318"/>
    <property type="project" value="GO_Central"/>
</dbReference>
<dbReference type="GO" id="GO:0005634">
    <property type="term" value="C:nucleus"/>
    <property type="evidence" value="ECO:0000318"/>
    <property type="project" value="GO_Central"/>
</dbReference>
<dbReference type="GO" id="GO:0005524">
    <property type="term" value="F:ATP binding"/>
    <property type="evidence" value="ECO:0007669"/>
    <property type="project" value="UniProtKB-KW"/>
</dbReference>
<dbReference type="GO" id="GO:0004707">
    <property type="term" value="F:MAP kinase activity"/>
    <property type="evidence" value="ECO:0007669"/>
    <property type="project" value="UniProtKB-EC"/>
</dbReference>
<dbReference type="GO" id="GO:0106310">
    <property type="term" value="F:protein serine kinase activity"/>
    <property type="evidence" value="ECO:0007669"/>
    <property type="project" value="RHEA"/>
</dbReference>
<dbReference type="GO" id="GO:0004674">
    <property type="term" value="F:protein serine/threonine kinase activity"/>
    <property type="evidence" value="ECO:0000318"/>
    <property type="project" value="GO_Central"/>
</dbReference>
<dbReference type="GO" id="GO:0034599">
    <property type="term" value="P:cellular response to oxidative stress"/>
    <property type="evidence" value="ECO:0000318"/>
    <property type="project" value="GO_Central"/>
</dbReference>
<dbReference type="GO" id="GO:0007231">
    <property type="term" value="P:osmosensory signaling pathway"/>
    <property type="evidence" value="ECO:0000318"/>
    <property type="project" value="GO_Central"/>
</dbReference>
<dbReference type="GO" id="GO:0051403">
    <property type="term" value="P:stress-activated MAPK cascade"/>
    <property type="evidence" value="ECO:0000318"/>
    <property type="project" value="GO_Central"/>
</dbReference>
<dbReference type="CDD" id="cd07856">
    <property type="entry name" value="STKc_Sty1_Hog1"/>
    <property type="match status" value="1"/>
</dbReference>
<dbReference type="FunFam" id="1.10.510.10:FF:000049">
    <property type="entry name" value="Mitogen-activated protein kinase"/>
    <property type="match status" value="1"/>
</dbReference>
<dbReference type="FunFam" id="3.30.200.20:FF:000050">
    <property type="entry name" value="Mitogen-activated protein kinase"/>
    <property type="match status" value="1"/>
</dbReference>
<dbReference type="Gene3D" id="3.30.200.20">
    <property type="entry name" value="Phosphorylase Kinase, domain 1"/>
    <property type="match status" value="1"/>
</dbReference>
<dbReference type="Gene3D" id="1.10.510.10">
    <property type="entry name" value="Transferase(Phosphotransferase) domain 1"/>
    <property type="match status" value="1"/>
</dbReference>
<dbReference type="InterPro" id="IPR011009">
    <property type="entry name" value="Kinase-like_dom_sf"/>
</dbReference>
<dbReference type="InterPro" id="IPR050117">
    <property type="entry name" value="MAP_kinase"/>
</dbReference>
<dbReference type="InterPro" id="IPR003527">
    <property type="entry name" value="MAP_kinase_CS"/>
</dbReference>
<dbReference type="InterPro" id="IPR008352">
    <property type="entry name" value="MAPK_p38-like"/>
</dbReference>
<dbReference type="InterPro" id="IPR038783">
    <property type="entry name" value="MAPK_Sty1/Hog1"/>
</dbReference>
<dbReference type="InterPro" id="IPR000719">
    <property type="entry name" value="Prot_kinase_dom"/>
</dbReference>
<dbReference type="InterPro" id="IPR017441">
    <property type="entry name" value="Protein_kinase_ATP_BS"/>
</dbReference>
<dbReference type="InterPro" id="IPR008271">
    <property type="entry name" value="Ser/Thr_kinase_AS"/>
</dbReference>
<dbReference type="PANTHER" id="PTHR24055">
    <property type="entry name" value="MITOGEN-ACTIVATED PROTEIN KINASE"/>
    <property type="match status" value="1"/>
</dbReference>
<dbReference type="Pfam" id="PF00069">
    <property type="entry name" value="Pkinase"/>
    <property type="match status" value="1"/>
</dbReference>
<dbReference type="PRINTS" id="PR01773">
    <property type="entry name" value="P38MAPKINASE"/>
</dbReference>
<dbReference type="SMART" id="SM00220">
    <property type="entry name" value="S_TKc"/>
    <property type="match status" value="1"/>
</dbReference>
<dbReference type="SUPFAM" id="SSF56112">
    <property type="entry name" value="Protein kinase-like (PK-like)"/>
    <property type="match status" value="1"/>
</dbReference>
<dbReference type="PROSITE" id="PS01351">
    <property type="entry name" value="MAPK"/>
    <property type="match status" value="1"/>
</dbReference>
<dbReference type="PROSITE" id="PS00107">
    <property type="entry name" value="PROTEIN_KINASE_ATP"/>
    <property type="match status" value="1"/>
</dbReference>
<dbReference type="PROSITE" id="PS50011">
    <property type="entry name" value="PROTEIN_KINASE_DOM"/>
    <property type="match status" value="1"/>
</dbReference>
<dbReference type="PROSITE" id="PS00108">
    <property type="entry name" value="PROTEIN_KINASE_ST"/>
    <property type="match status" value="1"/>
</dbReference>
<name>HOG1_CRYNJ</name>